<reference key="1">
    <citation type="journal article" date="2003" name="Gene">
        <title>A novel myosin heavy chain gene in human chromosome 19q13.3.</title>
        <authorList>
            <person name="Leal A."/>
            <person name="Endele S."/>
            <person name="Stengel C."/>
            <person name="Huehne K."/>
            <person name="Loetterle J."/>
            <person name="Barrantes R."/>
            <person name="Winterpacht A."/>
            <person name="Rautenstrauss B."/>
        </authorList>
    </citation>
    <scope>NUCLEOTIDE SEQUENCE [MRNA] (ISOFORM 1)</scope>
    <scope>ALTERNATIVE SPLICING</scope>
    <scope>TISSUE SPECIFICITY</scope>
    <source>
        <tissue>Sciatic nerve</tissue>
    </source>
</reference>
<reference key="2">
    <citation type="submission" date="2007-01" db="EMBL/GenBank/DDBJ databases">
        <title>The nucleotide sequence of a long cDNA clone isolated from human.</title>
        <authorList>
            <person name="Nagase T."/>
            <person name="Kikuno R."/>
            <person name="Yamakawa H."/>
            <person name="Ohara O."/>
        </authorList>
    </citation>
    <scope>NUCLEOTIDE SEQUENCE [LARGE SCALE MRNA] (ISOFORM 2)</scope>
    <source>
        <tissue>Brain</tissue>
    </source>
</reference>
<reference key="3">
    <citation type="journal article" date="2004" name="Nature">
        <title>The DNA sequence and biology of human chromosome 19.</title>
        <authorList>
            <person name="Grimwood J."/>
            <person name="Gordon L.A."/>
            <person name="Olsen A.S."/>
            <person name="Terry A."/>
            <person name="Schmutz J."/>
            <person name="Lamerdin J.E."/>
            <person name="Hellsten U."/>
            <person name="Goodstein D."/>
            <person name="Couronne O."/>
            <person name="Tran-Gyamfi M."/>
            <person name="Aerts A."/>
            <person name="Altherr M."/>
            <person name="Ashworth L."/>
            <person name="Bajorek E."/>
            <person name="Black S."/>
            <person name="Branscomb E."/>
            <person name="Caenepeel S."/>
            <person name="Carrano A.V."/>
            <person name="Caoile C."/>
            <person name="Chan Y.M."/>
            <person name="Christensen M."/>
            <person name="Cleland C.A."/>
            <person name="Copeland A."/>
            <person name="Dalin E."/>
            <person name="Dehal P."/>
            <person name="Denys M."/>
            <person name="Detter J.C."/>
            <person name="Escobar J."/>
            <person name="Flowers D."/>
            <person name="Fotopulos D."/>
            <person name="Garcia C."/>
            <person name="Georgescu A.M."/>
            <person name="Glavina T."/>
            <person name="Gomez M."/>
            <person name="Gonzales E."/>
            <person name="Groza M."/>
            <person name="Hammon N."/>
            <person name="Hawkins T."/>
            <person name="Haydu L."/>
            <person name="Ho I."/>
            <person name="Huang W."/>
            <person name="Israni S."/>
            <person name="Jett J."/>
            <person name="Kadner K."/>
            <person name="Kimball H."/>
            <person name="Kobayashi A."/>
            <person name="Larionov V."/>
            <person name="Leem S.-H."/>
            <person name="Lopez F."/>
            <person name="Lou Y."/>
            <person name="Lowry S."/>
            <person name="Malfatti S."/>
            <person name="Martinez D."/>
            <person name="McCready P.M."/>
            <person name="Medina C."/>
            <person name="Morgan J."/>
            <person name="Nelson K."/>
            <person name="Nolan M."/>
            <person name="Ovcharenko I."/>
            <person name="Pitluck S."/>
            <person name="Pollard M."/>
            <person name="Popkie A.P."/>
            <person name="Predki P."/>
            <person name="Quan G."/>
            <person name="Ramirez L."/>
            <person name="Rash S."/>
            <person name="Retterer J."/>
            <person name="Rodriguez A."/>
            <person name="Rogers S."/>
            <person name="Salamov A."/>
            <person name="Salazar A."/>
            <person name="She X."/>
            <person name="Smith D."/>
            <person name="Slezak T."/>
            <person name="Solovyev V."/>
            <person name="Thayer N."/>
            <person name="Tice H."/>
            <person name="Tsai M."/>
            <person name="Ustaszewska A."/>
            <person name="Vo N."/>
            <person name="Wagner M."/>
            <person name="Wheeler J."/>
            <person name="Wu K."/>
            <person name="Xie G."/>
            <person name="Yang J."/>
            <person name="Dubchak I."/>
            <person name="Furey T.S."/>
            <person name="DeJong P."/>
            <person name="Dickson M."/>
            <person name="Gordon D."/>
            <person name="Eichler E.E."/>
            <person name="Pennacchio L.A."/>
            <person name="Richardson P."/>
            <person name="Stubbs L."/>
            <person name="Rokhsar D.S."/>
            <person name="Myers R.M."/>
            <person name="Rubin E.M."/>
            <person name="Lucas S.M."/>
        </authorList>
    </citation>
    <scope>NUCLEOTIDE SEQUENCE [LARGE SCALE GENOMIC DNA]</scope>
</reference>
<reference key="4">
    <citation type="submission" date="2006-11" db="UniProtKB">
        <authorList>
            <person name="Bienvenut W.V."/>
            <person name="Heiserich L."/>
            <person name="Boulahbel H."/>
            <person name="Gottlieb E."/>
        </authorList>
    </citation>
    <scope>PROTEIN SEQUENCE OF 2-11; 190-204; 343-353; 403-413; 434-445; 607-613; 669-675; 718-726; 839-845; 899-906; 957-963; 984-990; 1105-1115; 1244-1264; 1469-1478; 1553-1562 AND 1686-1693</scope>
    <scope>CLEAVAGE OF INITIATOR METHIONINE</scope>
    <scope>ACETYLATION AT ALA-2</scope>
    <scope>IDENTIFICATION BY MASS SPECTROMETRY</scope>
    <source>
        <tissue>Colon carcinoma</tissue>
    </source>
</reference>
<reference key="5">
    <citation type="journal article" date="2004" name="Genome Res.">
        <title>The status, quality, and expansion of the NIH full-length cDNA project: the Mammalian Gene Collection (MGC).</title>
        <authorList>
            <consortium name="The MGC Project Team"/>
        </authorList>
    </citation>
    <scope>NUCLEOTIDE SEQUENCE [LARGE SCALE MRNA] OF 68-998 AND 1740-1995 (ISOFORM 1)</scope>
    <scope>NUCLEOTIDE SEQUENCE [LARGE SCALE MRNA] OF 1297-1995 (ISOFORM 4)</scope>
    <scope>NUCLEOTIDE SEQUENCE [LARGE SCALE MRNA] OF 1297-1995 (ISOFORM 5)</scope>
    <scope>NUCLEOTIDE SEQUENCE [LARGE SCALE MRNA] OF 209-477 (ISOFORM 6)</scope>
    <source>
        <tissue>Colon</tissue>
        <tissue>Lung</tissue>
        <tissue>Muscle</tissue>
        <tissue>Placenta</tissue>
    </source>
</reference>
<reference key="6">
    <citation type="journal article" date="2009" name="J. Biol. Chem.">
        <title>An alternatively spliced isoform of non-muscle myosin II-C is not regulated by myosin light chain phosphorylation.</title>
        <authorList>
            <person name="Jana S.S."/>
            <person name="Kim K.Y."/>
            <person name="Mao J."/>
            <person name="Kawamoto S."/>
            <person name="Sellers J.R."/>
            <person name="Adelstein R.S."/>
        </authorList>
    </citation>
    <scope>NUCLEOTIDE SEQUENCE [MRNA] OF 590-773 (ISOFORM 2)</scope>
    <scope>TISSUE SPECIFICITY</scope>
    <source>
        <tissue>Brain</tissue>
    </source>
</reference>
<reference key="7">
    <citation type="journal article" date="2004" name="Proc. Natl. Acad. Sci. U.S.A.">
        <title>Large-scale cDNA transfection screening for genes related to cancer development and progression.</title>
        <authorList>
            <person name="Wan D."/>
            <person name="Gong Y."/>
            <person name="Qin W."/>
            <person name="Zhang P."/>
            <person name="Li J."/>
            <person name="Wei L."/>
            <person name="Zhou X."/>
            <person name="Li H."/>
            <person name="Qiu X."/>
            <person name="Zhong F."/>
            <person name="He L."/>
            <person name="Yu J."/>
            <person name="Yao G."/>
            <person name="Jiang H."/>
            <person name="Qian L."/>
            <person name="Yu Y."/>
            <person name="Shu H."/>
            <person name="Chen X."/>
            <person name="Xu H."/>
            <person name="Guo M."/>
            <person name="Pan Z."/>
            <person name="Chen Y."/>
            <person name="Ge C."/>
            <person name="Yang S."/>
            <person name="Gu J."/>
        </authorList>
    </citation>
    <scope>NUCLEOTIDE SEQUENCE [LARGE SCALE MRNA] OF 964-1995 (ISOFORM 1)</scope>
</reference>
<reference key="8">
    <citation type="journal article" date="2007" name="BMC Genomics">
        <title>The full-ORF clone resource of the German cDNA consortium.</title>
        <authorList>
            <person name="Bechtel S."/>
            <person name="Rosenfelder H."/>
            <person name="Duda A."/>
            <person name="Schmidt C.P."/>
            <person name="Ernst U."/>
            <person name="Wellenreuther R."/>
            <person name="Mehrle A."/>
            <person name="Schuster C."/>
            <person name="Bahr A."/>
            <person name="Bloecker H."/>
            <person name="Heubner D."/>
            <person name="Hoerlein A."/>
            <person name="Michel G."/>
            <person name="Wedler H."/>
            <person name="Koehrer K."/>
            <person name="Ottenwaelder B."/>
            <person name="Poustka A."/>
            <person name="Wiemann S."/>
            <person name="Schupp I."/>
        </authorList>
    </citation>
    <scope>NUCLEOTIDE SEQUENCE [LARGE SCALE MRNA] OF 1335-1995 (ISOFORM 1)</scope>
    <source>
        <tissue>Lymph node</tissue>
    </source>
</reference>
<reference key="9">
    <citation type="journal article" date="2004" name="Nat. Genet.">
        <title>Complete sequencing and characterization of 21,243 full-length human cDNAs.</title>
        <authorList>
            <person name="Ota T."/>
            <person name="Suzuki Y."/>
            <person name="Nishikawa T."/>
            <person name="Otsuki T."/>
            <person name="Sugiyama T."/>
            <person name="Irie R."/>
            <person name="Wakamatsu A."/>
            <person name="Hayashi K."/>
            <person name="Sato H."/>
            <person name="Nagai K."/>
            <person name="Kimura K."/>
            <person name="Makita H."/>
            <person name="Sekine M."/>
            <person name="Obayashi M."/>
            <person name="Nishi T."/>
            <person name="Shibahara T."/>
            <person name="Tanaka T."/>
            <person name="Ishii S."/>
            <person name="Yamamoto J."/>
            <person name="Saito K."/>
            <person name="Kawai Y."/>
            <person name="Isono Y."/>
            <person name="Nakamura Y."/>
            <person name="Nagahari K."/>
            <person name="Murakami K."/>
            <person name="Yasuda T."/>
            <person name="Iwayanagi T."/>
            <person name="Wagatsuma M."/>
            <person name="Shiratori A."/>
            <person name="Sudo H."/>
            <person name="Hosoiri T."/>
            <person name="Kaku Y."/>
            <person name="Kodaira H."/>
            <person name="Kondo H."/>
            <person name="Sugawara M."/>
            <person name="Takahashi M."/>
            <person name="Kanda K."/>
            <person name="Yokoi T."/>
            <person name="Furuya T."/>
            <person name="Kikkawa E."/>
            <person name="Omura Y."/>
            <person name="Abe K."/>
            <person name="Kamihara K."/>
            <person name="Katsuta N."/>
            <person name="Sato K."/>
            <person name="Tanikawa M."/>
            <person name="Yamazaki M."/>
            <person name="Ninomiya K."/>
            <person name="Ishibashi T."/>
            <person name="Yamashita H."/>
            <person name="Murakawa K."/>
            <person name="Fujimori K."/>
            <person name="Tanai H."/>
            <person name="Kimata M."/>
            <person name="Watanabe M."/>
            <person name="Hiraoka S."/>
            <person name="Chiba Y."/>
            <person name="Ishida S."/>
            <person name="Ono Y."/>
            <person name="Takiguchi S."/>
            <person name="Watanabe S."/>
            <person name="Yosida M."/>
            <person name="Hotuta T."/>
            <person name="Kusano J."/>
            <person name="Kanehori K."/>
            <person name="Takahashi-Fujii A."/>
            <person name="Hara H."/>
            <person name="Tanase T.-O."/>
            <person name="Nomura Y."/>
            <person name="Togiya S."/>
            <person name="Komai F."/>
            <person name="Hara R."/>
            <person name="Takeuchi K."/>
            <person name="Arita M."/>
            <person name="Imose N."/>
            <person name="Musashino K."/>
            <person name="Yuuki H."/>
            <person name="Oshima A."/>
            <person name="Sasaki N."/>
            <person name="Aotsuka S."/>
            <person name="Yoshikawa Y."/>
            <person name="Matsunawa H."/>
            <person name="Ichihara T."/>
            <person name="Shiohata N."/>
            <person name="Sano S."/>
            <person name="Moriya S."/>
            <person name="Momiyama H."/>
            <person name="Satoh N."/>
            <person name="Takami S."/>
            <person name="Terashima Y."/>
            <person name="Suzuki O."/>
            <person name="Nakagawa S."/>
            <person name="Senoh A."/>
            <person name="Mizoguchi H."/>
            <person name="Goto Y."/>
            <person name="Shimizu F."/>
            <person name="Wakebe H."/>
            <person name="Hishigaki H."/>
            <person name="Watanabe T."/>
            <person name="Sugiyama A."/>
            <person name="Takemoto M."/>
            <person name="Kawakami B."/>
            <person name="Yamazaki M."/>
            <person name="Watanabe K."/>
            <person name="Kumagai A."/>
            <person name="Itakura S."/>
            <person name="Fukuzumi Y."/>
            <person name="Fujimori Y."/>
            <person name="Komiyama M."/>
            <person name="Tashiro H."/>
            <person name="Tanigami A."/>
            <person name="Fujiwara T."/>
            <person name="Ono T."/>
            <person name="Yamada K."/>
            <person name="Fujii Y."/>
            <person name="Ozaki K."/>
            <person name="Hirao M."/>
            <person name="Ohmori Y."/>
            <person name="Kawabata A."/>
            <person name="Hikiji T."/>
            <person name="Kobatake N."/>
            <person name="Inagaki H."/>
            <person name="Ikema Y."/>
            <person name="Okamoto S."/>
            <person name="Okitani R."/>
            <person name="Kawakami T."/>
            <person name="Noguchi S."/>
            <person name="Itoh T."/>
            <person name="Shigeta K."/>
            <person name="Senba T."/>
            <person name="Matsumura K."/>
            <person name="Nakajima Y."/>
            <person name="Mizuno T."/>
            <person name="Morinaga M."/>
            <person name="Sasaki M."/>
            <person name="Togashi T."/>
            <person name="Oyama M."/>
            <person name="Hata H."/>
            <person name="Watanabe M."/>
            <person name="Komatsu T."/>
            <person name="Mizushima-Sugano J."/>
            <person name="Satoh T."/>
            <person name="Shirai Y."/>
            <person name="Takahashi Y."/>
            <person name="Nakagawa K."/>
            <person name="Okumura K."/>
            <person name="Nagase T."/>
            <person name="Nomura N."/>
            <person name="Kikuchi H."/>
            <person name="Masuho Y."/>
            <person name="Yamashita R."/>
            <person name="Nakai K."/>
            <person name="Yada T."/>
            <person name="Nakamura Y."/>
            <person name="Ohara O."/>
            <person name="Isogai T."/>
            <person name="Sugano S."/>
        </authorList>
    </citation>
    <scope>NUCLEOTIDE SEQUENCE [LARGE SCALE MRNA] OF 1431-1995 (ISOFORM 1)</scope>
    <source>
        <tissue>Thyroid</tissue>
    </source>
</reference>
<reference key="10">
    <citation type="journal article" date="2002" name="Mol. Biol. Evol.">
        <title>Evolutionary implications of three novel members of the human sarcomeric myosin heavy chain gene family.</title>
        <authorList>
            <person name="Desjardins P.R."/>
            <person name="Burkman J.M."/>
            <person name="Shrager J.B."/>
            <person name="Allmond L.A."/>
            <person name="Stedman H.H."/>
        </authorList>
    </citation>
    <scope>IDENTIFICATION</scope>
</reference>
<reference key="11">
    <citation type="journal article" date="2004" name="J. Biol. Chem.">
        <title>Identification and characterization of nonmuscle myosin II-C, a new member of the myosin II family.</title>
        <authorList>
            <person name="Golomb E."/>
            <person name="Ma X."/>
            <person name="Jana S.S."/>
            <person name="Preston Y.A."/>
            <person name="Kawamoto S."/>
            <person name="Shoham N.G."/>
            <person name="Goldin E."/>
            <person name="Conti M.A."/>
            <person name="Sellers J.R."/>
            <person name="Adelstein R.S."/>
        </authorList>
    </citation>
    <scope>TISSUE SPECIFICITY</scope>
</reference>
<reference key="12">
    <citation type="journal article" date="2009" name="Anal. Chem.">
        <title>Lys-N and trypsin cover complementary parts of the phosphoproteome in a refined SCX-based approach.</title>
        <authorList>
            <person name="Gauci S."/>
            <person name="Helbig A.O."/>
            <person name="Slijper M."/>
            <person name="Krijgsveld J."/>
            <person name="Heck A.J."/>
            <person name="Mohammed S."/>
        </authorList>
    </citation>
    <scope>IDENTIFICATION BY MASS SPECTROMETRY [LARGE SCALE ANALYSIS]</scope>
</reference>
<reference key="13">
    <citation type="journal article" date="2011" name="BMC Syst. Biol.">
        <title>Initial characterization of the human central proteome.</title>
        <authorList>
            <person name="Burkard T.R."/>
            <person name="Planyavsky M."/>
            <person name="Kaupe I."/>
            <person name="Breitwieser F.P."/>
            <person name="Buerckstuemmer T."/>
            <person name="Bennett K.L."/>
            <person name="Superti-Furga G."/>
            <person name="Colinge J."/>
        </authorList>
    </citation>
    <scope>IDENTIFICATION BY MASS SPECTROMETRY [LARGE SCALE ANALYSIS]</scope>
</reference>
<reference key="14">
    <citation type="journal article" date="2011" name="Sci. Signal.">
        <title>System-wide temporal characterization of the proteome and phosphoproteome of human embryonic stem cell differentiation.</title>
        <authorList>
            <person name="Rigbolt K.T."/>
            <person name="Prokhorova T.A."/>
            <person name="Akimov V."/>
            <person name="Henningsen J."/>
            <person name="Johansen P.T."/>
            <person name="Kratchmarova I."/>
            <person name="Kassem M."/>
            <person name="Mann M."/>
            <person name="Olsen J.V."/>
            <person name="Blagoev B."/>
        </authorList>
    </citation>
    <scope>PHOSPHORYLATION [LARGE SCALE ANALYSIS] AT SER-1969 AND SER-1989</scope>
    <scope>IDENTIFICATION BY MASS SPECTROMETRY [LARGE SCALE ANALYSIS]</scope>
</reference>
<reference key="15">
    <citation type="journal article" date="2013" name="J. Proteome Res.">
        <title>Toward a comprehensive characterization of a human cancer cell phosphoproteome.</title>
        <authorList>
            <person name="Zhou H."/>
            <person name="Di Palma S."/>
            <person name="Preisinger C."/>
            <person name="Peng M."/>
            <person name="Polat A.N."/>
            <person name="Heck A.J."/>
            <person name="Mohammed S."/>
        </authorList>
    </citation>
    <scope>PHOSPHORYLATION [LARGE SCALE ANALYSIS] AT THR-1194</scope>
    <scope>IDENTIFICATION BY MASS SPECTROMETRY [LARGE SCALE ANALYSIS]</scope>
    <source>
        <tissue>Erythroleukemia</tissue>
    </source>
</reference>
<reference key="16">
    <citation type="journal article" date="2014" name="J. Proteomics">
        <title>An enzyme assisted RP-RPLC approach for in-depth analysis of human liver phosphoproteome.</title>
        <authorList>
            <person name="Bian Y."/>
            <person name="Song C."/>
            <person name="Cheng K."/>
            <person name="Dong M."/>
            <person name="Wang F."/>
            <person name="Huang J."/>
            <person name="Sun D."/>
            <person name="Wang L."/>
            <person name="Ye M."/>
            <person name="Zou H."/>
        </authorList>
    </citation>
    <scope>PHOSPHORYLATION [LARGE SCALE ANALYSIS] AT SER-60; SER-1969; SER-1980; SER-1983 AND SER-1989</scope>
    <scope>IDENTIFICATION BY MASS SPECTROMETRY [LARGE SCALE ANALYSIS]</scope>
    <source>
        <tissue>Liver</tissue>
    </source>
</reference>
<reference key="17">
    <citation type="journal article" date="2004" name="Am. J. Hum. Genet.">
        <title>Nonmuscle myosin heavy-chain gene MYH14 is expressed in cochlea and mutated in patients affected by autosomal dominant hearing impairment (DFNA4).</title>
        <authorList>
            <person name="Donaudy F."/>
            <person name="Snoeckx R."/>
            <person name="Pfister M."/>
            <person name="Zenner H.-P."/>
            <person name="Blin N."/>
            <person name="Di Stazio M."/>
            <person name="Ferrara A."/>
            <person name="Lanzara C."/>
            <person name="Ficarella R."/>
            <person name="Declau F."/>
            <person name="Pusch C.M."/>
            <person name="Nuernberg P."/>
            <person name="Melchionda S."/>
            <person name="Zelante L."/>
            <person name="Ballana E."/>
            <person name="Estivill X."/>
            <person name="Van Camp G."/>
            <person name="Gasparini P."/>
            <person name="Savoia A."/>
        </authorList>
    </citation>
    <scope>VARIANTS DFNA4A CYS-376; SER-726 AND PHE-976</scope>
    <scope>VARIANTS VAL-266 AND SER-1559</scope>
</reference>
<reference key="18">
    <citation type="journal article" date="2005" name="Am. J. Med. Genet. A">
        <title>Genetic heterogeneity of deafness phenotypes linked to DFNA4.</title>
        <authorList>
            <person name="Yang T."/>
            <person name="Pfister M."/>
            <person name="Blin N."/>
            <person name="Zenner H.P."/>
            <person name="Pusch C.M."/>
            <person name="Smith R.J.H."/>
        </authorList>
    </citation>
    <scope>VARIANT DFNA4A LEU-120</scope>
</reference>
<reference key="19">
    <citation type="journal article" date="2011" name="Hum. Mutat.">
        <title>A complex phenotype of peripheral neuropathy, myopathy, hoarseness, and hearing loss is linked to an autosomal dominant mutation in MYH14.</title>
        <authorList>
            <person name="Choi B.O."/>
            <person name="Kang S.H."/>
            <person name="Hyun Y.S."/>
            <person name="Kanwal S."/>
            <person name="Park S.W."/>
            <person name="Koo H."/>
            <person name="Kim S.B."/>
            <person name="Choi Y.C."/>
            <person name="Yoo J.H."/>
            <person name="Kim J.W."/>
            <person name="Park K.D."/>
            <person name="Choi K.G."/>
            <person name="Kim S.J."/>
            <person name="Zuchner S."/>
            <person name="Chung K.W."/>
        </authorList>
    </citation>
    <scope>VARIANT PNMHH LEU-933</scope>
    <scope>VARIANT VAL-1154</scope>
</reference>
<sequence length="1995" mass="227871">MAAVTMSVPGRKAPPRPGPVPEAAQPFLFTPRGPSAGGGPGSGTSPQVEWTARRLVWVPSELHGFEAAALRDEGEEEAEVELAESGRRLRLPRDQIQRMNPPKFSKAEDMAELTCLNEASVLHNLRERYYSGLIYTYSGLFCVVINPYKQLPIYTEAIVEMYRGKKRHEVPPHVYAVTEGAYRSMLQDREDQSILCTGESGAGKTENTKKVIQYLAHVASSPKGRKEPGVPGELERQLLQANPILEAFGNAKTVKNDNSSRFGKFIRINFDVAGYIVGANIETYLLEKSRAIRQAKDECSFHIFYQLLGGAGEQLKADLLLEPCSHYRFLTNGPSSSPGQERELFQETLESLRVLGFSHEEIISMLRMVSAVLQFGNIALKRERNTDQATMPDNTAAQKLCRLLGLGVTDFSRALLTPRIKVGRDYVQKAQTKEQADFALEALAKATYERLFRWLVLRLNRALDRSPRQGASFLGILDIAGFEIFQLNSFEQLCINYTNEKLQQLFNHTMFVLEQEEYQREGIPWTFLDFGLDLQPCIDLIERPANPPGLLALLDEECWFPKATDKSFVEKVAQEQGGHPKFQRPRHLRDQADFSVLHYAGKVDYKANEWLMKNMDPLNDNVAALLHQSTDRLTAEIWKDVEGIVGLEQVSSLGDGPPGGRPRRGMFRTVGQLYKESLSRLMATLSNTNPSFVRCIVPNHEKRAGKLEPRLVLDQLRCNGVLEGIRICRQGFPNRILFQEFRQRYEILTPNAIPKGFMDGKQACEKMIQALELDPNLYRVGQSKIFFRAGVLAQLEEERDLKVTDIIVSFQAAARGYLARRAFQKRQQQQSALRVMQRNCAAYLKLRHWQWWRLFTKVKPLLQVTRQDEVLQARAQELQKVQELQQQSAREVGELQGRVAQLEEERARLAEQLRAEAELCAEAEETRGRLAARKQELELVVSELEARVGEEEECSRQMQTEKKRLQQHIQELEAHLEAEEGARQKLQLEKVTTEAKMKKFEEDLLLLEDQNSKLSKERKLLEDRLAEFSSQAAEEEEKVKSLNKLRLKYEATIADMEDRLRKEEKGRQELEKLKRRLDGESSELQEQMVEQQQRAEELRAQLGRKEEELQAALARAEDEGGARAQLLKSLREAQAALAEAQEDLESERVARTKAEKQRRDLGEELEALRGELEDTLDSTNAQQELRSKREQEVTELKKTLEEETRIHEAAVQELRQRHGQALGELAEQLEQARRGKGAWEKTRLALEAEVSELRAELSSLQTARQEGEQRRRRLELQLQEVQGRAGDGERARAEAAEKLQRAQAELENVSGALNEAESKTIRLSKELSSTEAQLHDAQELLQEETRAKLALGSRVRAMEAEAAGLREQLEEEAAARERAGRELQTAQAQLSEWRRRQEEEAGALEAGEEARRRAAREAEALTQRLAEKTETVDRLERGRRRLQQELDDATMDLEQQRQLVSTLEKKQRKFDQLLAEEKAAVLRAVEERERAEAEGREREARALSLTRALEEEQEAREELERQNRALRAELEALLSSKDDVGKSVHELERACRVAEQAANDLRAQVTELEDELTAAEDAKLRLEVTVQALKTQHERDLQGRDEAGEERRRQLAKQLRDAEVERDEERKQRTLAVAARKKLEGELEELKAQMASAGQGKEEAVKQLRKMQAQMKELWREVEETRTSREEIFSQNRESEKRLKGLEAEVLRLQEELAASDRARRQAQQDRDEMADEVANGNLSKAAILEEKRQLEGRLGQLEEELEEEQSNSELLNDRYRKLLLQVESLTTELSAERSFSAKAESGRQQLERQIQELRGRLGEEDAGARARHKMTIAALESKLAQAEEQLEQETRERILSGKLVRRAEKRLKEVVLQVEEERRVADQLRDQLEKGNLRVKQLKRQLEEAEEEASRAQAGRRRLQRELEDVTESAESMNREVTTLRNRLRRGPLTFTTRTVRQVFRLEEGVASDEEAEEAQPGSGPSPEPEGSPPAHPQ</sequence>
<keyword id="KW-0002">3D-structure</keyword>
<keyword id="KW-0007">Acetylation</keyword>
<keyword id="KW-0009">Actin-binding</keyword>
<keyword id="KW-0025">Alternative splicing</keyword>
<keyword id="KW-0067">ATP-binding</keyword>
<keyword id="KW-0112">Calmodulin-binding</keyword>
<keyword id="KW-0133">Cell shape</keyword>
<keyword id="KW-0175">Coiled coil</keyword>
<keyword id="KW-0209">Deafness</keyword>
<keyword id="KW-0903">Direct protein sequencing</keyword>
<keyword id="KW-0225">Disease variant</keyword>
<keyword id="KW-0505">Motor protein</keyword>
<keyword id="KW-0518">Myosin</keyword>
<keyword id="KW-0622">Neuropathy</keyword>
<keyword id="KW-1010">Non-syndromic deafness</keyword>
<keyword id="KW-0547">Nucleotide-binding</keyword>
<keyword id="KW-0597">Phosphoprotein</keyword>
<keyword id="KW-1267">Proteomics identification</keyword>
<keyword id="KW-1185">Reference proteome</keyword>
<organism>
    <name type="scientific">Homo sapiens</name>
    <name type="common">Human</name>
    <dbReference type="NCBI Taxonomy" id="9606"/>
    <lineage>
        <taxon>Eukaryota</taxon>
        <taxon>Metazoa</taxon>
        <taxon>Chordata</taxon>
        <taxon>Craniata</taxon>
        <taxon>Vertebrata</taxon>
        <taxon>Euteleostomi</taxon>
        <taxon>Mammalia</taxon>
        <taxon>Eutheria</taxon>
        <taxon>Euarchontoglires</taxon>
        <taxon>Primates</taxon>
        <taxon>Haplorrhini</taxon>
        <taxon>Catarrhini</taxon>
        <taxon>Hominidae</taxon>
        <taxon>Homo</taxon>
    </lineage>
</organism>
<gene>
    <name type="primary">MYH14</name>
    <name type="synonym">KIAA2034</name>
    <name type="ORF">FP17425</name>
</gene>
<proteinExistence type="evidence at protein level"/>
<name>MYH14_HUMAN</name>
<protein>
    <recommendedName>
        <fullName>Myosin-14</fullName>
    </recommendedName>
    <alternativeName>
        <fullName>Myosin heavy chain 14</fullName>
    </alternativeName>
    <alternativeName>
        <fullName>Myosin heavy chain, non-muscle IIc</fullName>
    </alternativeName>
    <alternativeName>
        <fullName>Non-muscle myosin heavy chain IIc</fullName>
        <shortName>NMHC II-C</shortName>
    </alternativeName>
</protein>
<dbReference type="EMBL" id="AY165122">
    <property type="protein sequence ID" value="AAO39147.1"/>
    <property type="status" value="ALT_FRAME"/>
    <property type="molecule type" value="mRNA"/>
</dbReference>
<dbReference type="EMBL" id="AB111886">
    <property type="protein sequence ID" value="BAC98374.1"/>
    <property type="molecule type" value="mRNA"/>
</dbReference>
<dbReference type="EMBL" id="AB290169">
    <property type="protein sequence ID" value="BAG06723.1"/>
    <property type="molecule type" value="mRNA"/>
</dbReference>
<dbReference type="EMBL" id="AC008655">
    <property type="status" value="NOT_ANNOTATED_CDS"/>
    <property type="molecule type" value="Genomic_DNA"/>
</dbReference>
<dbReference type="EMBL" id="AC010515">
    <property type="status" value="NOT_ANNOTATED_CDS"/>
    <property type="molecule type" value="Genomic_DNA"/>
</dbReference>
<dbReference type="EMBL" id="AC020906">
    <property type="status" value="NOT_ANNOTATED_CDS"/>
    <property type="molecule type" value="Genomic_DNA"/>
</dbReference>
<dbReference type="EMBL" id="BC000676">
    <property type="protein sequence ID" value="AAH00676.2"/>
    <property type="molecule type" value="mRNA"/>
</dbReference>
<dbReference type="EMBL" id="BC004396">
    <property type="protein sequence ID" value="AAH04396.1"/>
    <property type="molecule type" value="mRNA"/>
</dbReference>
<dbReference type="EMBL" id="BC007877">
    <property type="protein sequence ID" value="AAH07877.2"/>
    <property type="molecule type" value="mRNA"/>
</dbReference>
<dbReference type="EMBL" id="BC018933">
    <property type="protein sequence ID" value="AAH18933.2"/>
    <property type="molecule type" value="mRNA"/>
</dbReference>
<dbReference type="EMBL" id="FJ041910">
    <property type="protein sequence ID" value="ACM78630.1"/>
    <property type="molecule type" value="mRNA"/>
</dbReference>
<dbReference type="EMBL" id="BG468611">
    <property type="status" value="NOT_ANNOTATED_CDS"/>
    <property type="molecule type" value="mRNA"/>
</dbReference>
<dbReference type="EMBL" id="AY203926">
    <property type="protein sequence ID" value="AAP34449.1"/>
    <property type="status" value="ALT_SEQ"/>
    <property type="molecule type" value="mRNA"/>
</dbReference>
<dbReference type="EMBL" id="CR936653">
    <property type="protein sequence ID" value="CAI56791.1"/>
    <property type="molecule type" value="mRNA"/>
</dbReference>
<dbReference type="EMBL" id="AK023943">
    <property type="protein sequence ID" value="BAB14735.1"/>
    <property type="status" value="ALT_INIT"/>
    <property type="molecule type" value="mRNA"/>
</dbReference>
<dbReference type="CCDS" id="CCDS46151.1">
    <molecule id="Q7Z406-6"/>
</dbReference>
<dbReference type="CCDS" id="CCDS54295.1">
    <molecule id="Q7Z406-2"/>
</dbReference>
<dbReference type="CCDS" id="CCDS59411.1">
    <molecule id="Q7Z406-1"/>
</dbReference>
<dbReference type="RefSeq" id="NP_001070654.1">
    <molecule id="Q7Z406-6"/>
    <property type="nucleotide sequence ID" value="NM_001077186.2"/>
</dbReference>
<dbReference type="RefSeq" id="NP_001139281.1">
    <molecule id="Q7Z406-2"/>
    <property type="nucleotide sequence ID" value="NM_001145809.2"/>
</dbReference>
<dbReference type="RefSeq" id="NP_079005.3">
    <molecule id="Q7Z406-1"/>
    <property type="nucleotide sequence ID" value="NM_024729.3"/>
</dbReference>
<dbReference type="RefSeq" id="XP_006723449.1">
    <property type="nucleotide sequence ID" value="XM_006723386.3"/>
</dbReference>
<dbReference type="RefSeq" id="XP_011525625.1">
    <property type="nucleotide sequence ID" value="XM_011527323.2"/>
</dbReference>
<dbReference type="PDB" id="5I4E">
    <property type="method" value="X-ray"/>
    <property type="resolution" value="2.25 A"/>
    <property type="chains" value="A=47-784"/>
</dbReference>
<dbReference type="PDB" id="5JLH">
    <property type="method" value="EM"/>
    <property type="resolution" value="3.90 A"/>
    <property type="chains" value="F/G=1-799"/>
</dbReference>
<dbReference type="PDBsum" id="5I4E"/>
<dbReference type="PDBsum" id="5JLH"/>
<dbReference type="EMDB" id="EMD-8165"/>
<dbReference type="SMR" id="Q7Z406"/>
<dbReference type="BioGRID" id="122884">
    <property type="interactions" value="210"/>
</dbReference>
<dbReference type="DIP" id="DIP-33170N"/>
<dbReference type="FunCoup" id="Q7Z406">
    <property type="interactions" value="899"/>
</dbReference>
<dbReference type="IntAct" id="Q7Z406">
    <property type="interactions" value="87"/>
</dbReference>
<dbReference type="MINT" id="Q7Z406"/>
<dbReference type="STRING" id="9606.ENSP00000493594"/>
<dbReference type="ChEMBL" id="CHEMBL4105888"/>
<dbReference type="DrugBank" id="DB07470">
    <property type="generic name" value="(3aS)-3a-hydroxy-1-phenyl-1,2,3,3a-tetrahydro-4H-pyrrolo[2,3-b]quinolin-4-one"/>
</dbReference>
<dbReference type="DrugBank" id="DB07468">
    <property type="generic name" value="(3aS)-3a-hydroxy-5-methyl-1-phenyl-1,2,3,3a-tetrahydro-4H-pyrrolo[2,3-b]quinolin-4-one"/>
</dbReference>
<dbReference type="DrugBank" id="DB07469">
    <property type="generic name" value="(3aS)-3a-hydroxy-7-methyl-1-phenyl-1,2,3,3a-tetrahydro-4H-pyrrolo[2,3-b]quinolin-4-one"/>
</dbReference>
<dbReference type="DrugBank" id="DB01944">
    <property type="generic name" value="(S)-blebbistatin"/>
</dbReference>
<dbReference type="DrugBank" id="DB03126">
    <property type="generic name" value="Mant-Adp"/>
</dbReference>
<dbReference type="DrugBank" id="DB04444">
    <property type="generic name" value="Tetrafluoroaluminate Ion"/>
</dbReference>
<dbReference type="DrugBank" id="DB08276">
    <property type="generic name" value="trifluoro-[hydroxy-[hydroxy-[2-(N-methyl-2-nitro-anilino)ethoxy]phosphoryl]oxy-phosphoryl]oxy-beryllium(1-)"/>
</dbReference>
<dbReference type="DrugCentral" id="Q7Z406"/>
<dbReference type="GlyCosmos" id="Q7Z406">
    <property type="glycosylation" value="2 sites, 2 glycans"/>
</dbReference>
<dbReference type="GlyGen" id="Q7Z406">
    <property type="glycosylation" value="4 sites, 2 O-linked glycans (2 sites)"/>
</dbReference>
<dbReference type="iPTMnet" id="Q7Z406"/>
<dbReference type="PhosphoSitePlus" id="Q7Z406"/>
<dbReference type="SwissPalm" id="Q7Z406"/>
<dbReference type="BioMuta" id="MYH14"/>
<dbReference type="DMDM" id="327478526"/>
<dbReference type="CPTAC" id="CPTAC-240"/>
<dbReference type="CPTAC" id="CPTAC-241"/>
<dbReference type="jPOST" id="Q7Z406"/>
<dbReference type="MassIVE" id="Q7Z406"/>
<dbReference type="PaxDb" id="9606-ENSP00000470298"/>
<dbReference type="PeptideAtlas" id="Q7Z406"/>
<dbReference type="PRIDE" id="Q7Z406"/>
<dbReference type="ProteomicsDB" id="69113">
    <molecule id="Q7Z406-1"/>
</dbReference>
<dbReference type="ProteomicsDB" id="69114">
    <molecule id="Q7Z406-2"/>
</dbReference>
<dbReference type="ProteomicsDB" id="69115">
    <molecule id="Q7Z406-4"/>
</dbReference>
<dbReference type="ProteomicsDB" id="69116">
    <molecule id="Q7Z406-5"/>
</dbReference>
<dbReference type="ProteomicsDB" id="69117">
    <molecule id="Q7Z406-6"/>
</dbReference>
<dbReference type="Pumba" id="Q7Z406"/>
<dbReference type="Antibodypedia" id="32261">
    <property type="antibodies" value="259 antibodies from 33 providers"/>
</dbReference>
<dbReference type="DNASU" id="79784"/>
<dbReference type="Ensembl" id="ENST00000376970.6">
    <molecule id="Q7Z406-1"/>
    <property type="protein sequence ID" value="ENSP00000366169.3"/>
    <property type="gene ID" value="ENSG00000105357.20"/>
</dbReference>
<dbReference type="Ensembl" id="ENST00000425460.6">
    <molecule id="Q7Z406-6"/>
    <property type="protein sequence ID" value="ENSP00000407879.1"/>
    <property type="gene ID" value="ENSG00000105357.20"/>
</dbReference>
<dbReference type="Ensembl" id="ENST00000596571.5">
    <molecule id="Q7Z406-1"/>
    <property type="protein sequence ID" value="ENSP00000472819.1"/>
    <property type="gene ID" value="ENSG00000105357.20"/>
</dbReference>
<dbReference type="Ensembl" id="ENST00000598205.5">
    <molecule id="Q7Z406-6"/>
    <property type="protein sequence ID" value="ENSP00000472543.1"/>
    <property type="gene ID" value="ENSG00000105357.20"/>
</dbReference>
<dbReference type="Ensembl" id="ENST00000642316.2">
    <molecule id="Q7Z406-2"/>
    <property type="protein sequence ID" value="ENSP00000493594.1"/>
    <property type="gene ID" value="ENSG00000105357.20"/>
</dbReference>
<dbReference type="GeneID" id="79784"/>
<dbReference type="KEGG" id="hsa:79784"/>
<dbReference type="MANE-Select" id="ENST00000642316.2">
    <molecule id="Q7Z406-2"/>
    <property type="protein sequence ID" value="ENSP00000493594.1"/>
    <property type="RefSeq nucleotide sequence ID" value="NM_001145809.2"/>
    <property type="RefSeq protein sequence ID" value="NP_001139281.1"/>
</dbReference>
<dbReference type="UCSC" id="uc002prq.2">
    <molecule id="Q7Z406-1"/>
    <property type="organism name" value="human"/>
</dbReference>
<dbReference type="AGR" id="HGNC:23212"/>
<dbReference type="CTD" id="79784"/>
<dbReference type="DisGeNET" id="79784"/>
<dbReference type="GeneCards" id="MYH14"/>
<dbReference type="GeneReviews" id="MYH14"/>
<dbReference type="HGNC" id="HGNC:23212">
    <property type="gene designation" value="MYH14"/>
</dbReference>
<dbReference type="HPA" id="ENSG00000105357">
    <property type="expression patterns" value="Tissue enhanced (intestine, skeletal muscle)"/>
</dbReference>
<dbReference type="MalaCards" id="MYH14"/>
<dbReference type="MIM" id="600652">
    <property type="type" value="phenotype"/>
</dbReference>
<dbReference type="MIM" id="608568">
    <property type="type" value="gene"/>
</dbReference>
<dbReference type="MIM" id="614369">
    <property type="type" value="phenotype"/>
</dbReference>
<dbReference type="neXtProt" id="NX_Q7Z406"/>
<dbReference type="OpenTargets" id="ENSG00000105357"/>
<dbReference type="Orphanet" id="397744">
    <property type="disease" value="Peripheral neuropathy-myopathy-hoarseness-hearing loss syndrome"/>
</dbReference>
<dbReference type="Orphanet" id="90635">
    <property type="disease" value="Rare autosomal dominant non-syndromic sensorineural deafness type DFNA"/>
</dbReference>
<dbReference type="PharmGKB" id="PA134935217"/>
<dbReference type="VEuPathDB" id="HostDB:ENSG00000105357"/>
<dbReference type="eggNOG" id="KOG0161">
    <property type="taxonomic scope" value="Eukaryota"/>
</dbReference>
<dbReference type="GeneTree" id="ENSGT00940000158808"/>
<dbReference type="HOGENOM" id="CLU_000192_4_1_1"/>
<dbReference type="InParanoid" id="Q7Z406"/>
<dbReference type="OrthoDB" id="10254995at2759"/>
<dbReference type="PAN-GO" id="Q7Z406">
    <property type="GO annotations" value="3 GO annotations based on evolutionary models"/>
</dbReference>
<dbReference type="PhylomeDB" id="Q7Z406"/>
<dbReference type="TreeFam" id="TF333601"/>
<dbReference type="PathwayCommons" id="Q7Z406"/>
<dbReference type="Reactome" id="R-HSA-3928663">
    <property type="pathway name" value="EPHA-mediated growth cone collapse"/>
</dbReference>
<dbReference type="Reactome" id="R-HSA-416572">
    <property type="pathway name" value="Sema4D induced cell migration and growth-cone collapse"/>
</dbReference>
<dbReference type="Reactome" id="R-HSA-5625740">
    <property type="pathway name" value="RHO GTPases activate PKNs"/>
</dbReference>
<dbReference type="Reactome" id="R-HSA-5625900">
    <property type="pathway name" value="RHO GTPases activate CIT"/>
</dbReference>
<dbReference type="Reactome" id="R-HSA-5627117">
    <property type="pathway name" value="RHO GTPases Activate ROCKs"/>
</dbReference>
<dbReference type="Reactome" id="R-HSA-5627123">
    <property type="pathway name" value="RHO GTPases activate PAKs"/>
</dbReference>
<dbReference type="SignaLink" id="Q7Z406"/>
<dbReference type="BioGRID-ORCS" id="79784">
    <property type="hits" value="10 hits in 1150 CRISPR screens"/>
</dbReference>
<dbReference type="CD-CODE" id="FB4E32DD">
    <property type="entry name" value="Presynaptic clusters and postsynaptic densities"/>
</dbReference>
<dbReference type="ChiTaRS" id="MYH14">
    <property type="organism name" value="human"/>
</dbReference>
<dbReference type="GeneWiki" id="MYH14"/>
<dbReference type="GenomeRNAi" id="79784"/>
<dbReference type="Pharos" id="Q7Z406">
    <property type="development level" value="Tchem"/>
</dbReference>
<dbReference type="PRO" id="PR:Q7Z406"/>
<dbReference type="Proteomes" id="UP000005640">
    <property type="component" value="Chromosome 19"/>
</dbReference>
<dbReference type="RNAct" id="Q7Z406">
    <property type="molecule type" value="protein"/>
</dbReference>
<dbReference type="Bgee" id="ENSG00000105357">
    <property type="expression patterns" value="Expressed in mucosa of transverse colon and 154 other cell types or tissues"/>
</dbReference>
<dbReference type="ExpressionAtlas" id="Q7Z406">
    <property type="expression patterns" value="baseline and differential"/>
</dbReference>
<dbReference type="GO" id="GO:0042641">
    <property type="term" value="C:actomyosin"/>
    <property type="evidence" value="ECO:0000314"/>
    <property type="project" value="UniProtKB"/>
</dbReference>
<dbReference type="GO" id="GO:0005903">
    <property type="term" value="C:brush border"/>
    <property type="evidence" value="ECO:0007669"/>
    <property type="project" value="Ensembl"/>
</dbReference>
<dbReference type="GO" id="GO:0005737">
    <property type="term" value="C:cytoplasm"/>
    <property type="evidence" value="ECO:0000318"/>
    <property type="project" value="GO_Central"/>
</dbReference>
<dbReference type="GO" id="GO:0005829">
    <property type="term" value="C:cytosol"/>
    <property type="evidence" value="ECO:0000304"/>
    <property type="project" value="Reactome"/>
</dbReference>
<dbReference type="GO" id="GO:0070062">
    <property type="term" value="C:extracellular exosome"/>
    <property type="evidence" value="ECO:0007005"/>
    <property type="project" value="UniProtKB"/>
</dbReference>
<dbReference type="GO" id="GO:0030426">
    <property type="term" value="C:growth cone"/>
    <property type="evidence" value="ECO:0007669"/>
    <property type="project" value="Ensembl"/>
</dbReference>
<dbReference type="GO" id="GO:0016020">
    <property type="term" value="C:membrane"/>
    <property type="evidence" value="ECO:0007005"/>
    <property type="project" value="UniProtKB"/>
</dbReference>
<dbReference type="GO" id="GO:0032982">
    <property type="term" value="C:myosin filament"/>
    <property type="evidence" value="ECO:0000318"/>
    <property type="project" value="GO_Central"/>
</dbReference>
<dbReference type="GO" id="GO:0016460">
    <property type="term" value="C:myosin II complex"/>
    <property type="evidence" value="ECO:0000314"/>
    <property type="project" value="UniProtKB"/>
</dbReference>
<dbReference type="GO" id="GO:0097513">
    <property type="term" value="C:myosin II filament"/>
    <property type="evidence" value="ECO:0000314"/>
    <property type="project" value="UniProtKB"/>
</dbReference>
<dbReference type="GO" id="GO:0001725">
    <property type="term" value="C:stress fiber"/>
    <property type="evidence" value="ECO:0007669"/>
    <property type="project" value="Ensembl"/>
</dbReference>
<dbReference type="GO" id="GO:0051015">
    <property type="term" value="F:actin filament binding"/>
    <property type="evidence" value="ECO:0007669"/>
    <property type="project" value="Ensembl"/>
</dbReference>
<dbReference type="GO" id="GO:0005524">
    <property type="term" value="F:ATP binding"/>
    <property type="evidence" value="ECO:0007669"/>
    <property type="project" value="UniProtKB-KW"/>
</dbReference>
<dbReference type="GO" id="GO:0005516">
    <property type="term" value="F:calmodulin binding"/>
    <property type="evidence" value="ECO:0007669"/>
    <property type="project" value="UniProtKB-KW"/>
</dbReference>
<dbReference type="GO" id="GO:0000146">
    <property type="term" value="F:microfilament motor activity"/>
    <property type="evidence" value="ECO:0007669"/>
    <property type="project" value="Ensembl"/>
</dbReference>
<dbReference type="GO" id="GO:0030048">
    <property type="term" value="P:actin filament-based movement"/>
    <property type="evidence" value="ECO:0007669"/>
    <property type="project" value="Ensembl"/>
</dbReference>
<dbReference type="GO" id="GO:0031032">
    <property type="term" value="P:actomyosin structure organization"/>
    <property type="evidence" value="ECO:0000314"/>
    <property type="project" value="UniProtKB"/>
</dbReference>
<dbReference type="GO" id="GO:0007005">
    <property type="term" value="P:mitochondrion organization"/>
    <property type="evidence" value="ECO:0000315"/>
    <property type="project" value="UniProtKB"/>
</dbReference>
<dbReference type="GO" id="GO:0000281">
    <property type="term" value="P:mitotic cytokinesis"/>
    <property type="evidence" value="ECO:0000318"/>
    <property type="project" value="GO_Central"/>
</dbReference>
<dbReference type="GO" id="GO:0019228">
    <property type="term" value="P:neuronal action potential"/>
    <property type="evidence" value="ECO:0000315"/>
    <property type="project" value="UniProtKB"/>
</dbReference>
<dbReference type="GO" id="GO:0008360">
    <property type="term" value="P:regulation of cell shape"/>
    <property type="evidence" value="ECO:0000318"/>
    <property type="project" value="GO_Central"/>
</dbReference>
<dbReference type="GO" id="GO:0007605">
    <property type="term" value="P:sensory perception of sound"/>
    <property type="evidence" value="ECO:0000315"/>
    <property type="project" value="UniProtKB"/>
</dbReference>
<dbReference type="GO" id="GO:0003009">
    <property type="term" value="P:skeletal muscle contraction"/>
    <property type="evidence" value="ECO:0000315"/>
    <property type="project" value="UniProtKB"/>
</dbReference>
<dbReference type="GO" id="GO:0007519">
    <property type="term" value="P:skeletal muscle tissue development"/>
    <property type="evidence" value="ECO:0000315"/>
    <property type="project" value="UniProtKB"/>
</dbReference>
<dbReference type="GO" id="GO:0071625">
    <property type="term" value="P:vocalization behavior"/>
    <property type="evidence" value="ECO:0000315"/>
    <property type="project" value="UniProtKB"/>
</dbReference>
<dbReference type="CDD" id="cd14930">
    <property type="entry name" value="MYSc_Myh14_mammals"/>
    <property type="match status" value="1"/>
</dbReference>
<dbReference type="FunFam" id="2.30.30.360:FF:000001">
    <property type="entry name" value="Myosin heavy chain"/>
    <property type="match status" value="1"/>
</dbReference>
<dbReference type="FunFam" id="1.20.120.720:FF:000002">
    <property type="entry name" value="Myosin heavy chain 10"/>
    <property type="match status" value="1"/>
</dbReference>
<dbReference type="FunFam" id="1.20.5.4820:FF:000002">
    <property type="entry name" value="Myosin heavy chain 10"/>
    <property type="match status" value="1"/>
</dbReference>
<dbReference type="FunFam" id="1.20.58.530:FF:000003">
    <property type="entry name" value="Myosin heavy chain 10"/>
    <property type="match status" value="1"/>
</dbReference>
<dbReference type="FunFam" id="1.20.5.340:FF:000008">
    <property type="entry name" value="Myosin heavy chain 11"/>
    <property type="match status" value="1"/>
</dbReference>
<dbReference type="FunFam" id="1.20.5.340:FF:000007">
    <property type="entry name" value="Myosin heavy chain, non-muscle"/>
    <property type="match status" value="1"/>
</dbReference>
<dbReference type="FunFam" id="1.20.5.340:FF:000009">
    <property type="entry name" value="myosin-11 isoform X2"/>
    <property type="match status" value="1"/>
</dbReference>
<dbReference type="FunFam" id="3.40.850.10:FF:000101">
    <property type="entry name" value="Slow myosin heavy chain 2"/>
    <property type="match status" value="1"/>
</dbReference>
<dbReference type="Gene3D" id="1.10.10.820">
    <property type="match status" value="1"/>
</dbReference>
<dbReference type="Gene3D" id="1.20.5.340">
    <property type="match status" value="3"/>
</dbReference>
<dbReference type="Gene3D" id="1.20.5.4820">
    <property type="match status" value="1"/>
</dbReference>
<dbReference type="Gene3D" id="1.20.58.530">
    <property type="match status" value="1"/>
</dbReference>
<dbReference type="Gene3D" id="6.10.250.2420">
    <property type="match status" value="1"/>
</dbReference>
<dbReference type="Gene3D" id="3.40.850.10">
    <property type="entry name" value="Kinesin motor domain"/>
    <property type="match status" value="1"/>
</dbReference>
<dbReference type="Gene3D" id="2.30.30.360">
    <property type="entry name" value="Myosin S1 fragment, N-terminal"/>
    <property type="match status" value="1"/>
</dbReference>
<dbReference type="Gene3D" id="1.20.120.720">
    <property type="entry name" value="Myosin VI head, motor domain, U50 subdomain"/>
    <property type="match status" value="1"/>
</dbReference>
<dbReference type="InterPro" id="IPR000048">
    <property type="entry name" value="IQ_motif_EF-hand-BS"/>
</dbReference>
<dbReference type="InterPro" id="IPR036961">
    <property type="entry name" value="Kinesin_motor_dom_sf"/>
</dbReference>
<dbReference type="InterPro" id="IPR001609">
    <property type="entry name" value="Myosin_head_motor_dom-like"/>
</dbReference>
<dbReference type="InterPro" id="IPR004009">
    <property type="entry name" value="Myosin_N"/>
</dbReference>
<dbReference type="InterPro" id="IPR008989">
    <property type="entry name" value="Myosin_S1_N"/>
</dbReference>
<dbReference type="InterPro" id="IPR002928">
    <property type="entry name" value="Myosin_tail"/>
</dbReference>
<dbReference type="InterPro" id="IPR027417">
    <property type="entry name" value="P-loop_NTPase"/>
</dbReference>
<dbReference type="PANTHER" id="PTHR45615">
    <property type="entry name" value="MYOSIN HEAVY CHAIN, NON-MUSCLE"/>
    <property type="match status" value="1"/>
</dbReference>
<dbReference type="PANTHER" id="PTHR45615:SF31">
    <property type="entry name" value="MYOSIN-14"/>
    <property type="match status" value="1"/>
</dbReference>
<dbReference type="Pfam" id="PF00063">
    <property type="entry name" value="Myosin_head"/>
    <property type="match status" value="1"/>
</dbReference>
<dbReference type="Pfam" id="PF02736">
    <property type="entry name" value="Myosin_N"/>
    <property type="match status" value="1"/>
</dbReference>
<dbReference type="Pfam" id="PF01576">
    <property type="entry name" value="Myosin_tail_1"/>
    <property type="match status" value="1"/>
</dbReference>
<dbReference type="PRINTS" id="PR00193">
    <property type="entry name" value="MYOSINHEAVY"/>
</dbReference>
<dbReference type="SMART" id="SM00015">
    <property type="entry name" value="IQ"/>
    <property type="match status" value="1"/>
</dbReference>
<dbReference type="SMART" id="SM00242">
    <property type="entry name" value="MYSc"/>
    <property type="match status" value="1"/>
</dbReference>
<dbReference type="SUPFAM" id="SSF90257">
    <property type="entry name" value="Myosin rod fragments"/>
    <property type="match status" value="5"/>
</dbReference>
<dbReference type="SUPFAM" id="SSF52540">
    <property type="entry name" value="P-loop containing nucleoside triphosphate hydrolases"/>
    <property type="match status" value="1"/>
</dbReference>
<dbReference type="PROSITE" id="PS50096">
    <property type="entry name" value="IQ"/>
    <property type="match status" value="1"/>
</dbReference>
<dbReference type="PROSITE" id="PS51456">
    <property type="entry name" value="MYOSIN_MOTOR"/>
    <property type="match status" value="1"/>
</dbReference>
<dbReference type="PROSITE" id="PS51844">
    <property type="entry name" value="SH3_LIKE"/>
    <property type="match status" value="1"/>
</dbReference>
<evidence type="ECO:0000250" key="1"/>
<evidence type="ECO:0000255" key="2"/>
<evidence type="ECO:0000255" key="3">
    <source>
        <dbReference type="PROSITE-ProRule" id="PRU00116"/>
    </source>
</evidence>
<evidence type="ECO:0000255" key="4">
    <source>
        <dbReference type="PROSITE-ProRule" id="PRU00782"/>
    </source>
</evidence>
<evidence type="ECO:0000255" key="5">
    <source>
        <dbReference type="PROSITE-ProRule" id="PRU01190"/>
    </source>
</evidence>
<evidence type="ECO:0000256" key="6">
    <source>
        <dbReference type="SAM" id="MobiDB-lite"/>
    </source>
</evidence>
<evidence type="ECO:0000269" key="7">
    <source>
    </source>
</evidence>
<evidence type="ECO:0000269" key="8">
    <source>
    </source>
</evidence>
<evidence type="ECO:0000269" key="9">
    <source>
    </source>
</evidence>
<evidence type="ECO:0000269" key="10">
    <source>
    </source>
</evidence>
<evidence type="ECO:0000269" key="11">
    <source>
    </source>
</evidence>
<evidence type="ECO:0000269" key="12">
    <source>
    </source>
</evidence>
<evidence type="ECO:0000269" key="13">
    <source ref="4"/>
</evidence>
<evidence type="ECO:0000303" key="14">
    <source>
    </source>
</evidence>
<evidence type="ECO:0000303" key="15">
    <source>
    </source>
</evidence>
<evidence type="ECO:0000303" key="16">
    <source ref="2"/>
</evidence>
<evidence type="ECO:0000305" key="17"/>
<evidence type="ECO:0007744" key="18">
    <source>
    </source>
</evidence>
<evidence type="ECO:0007744" key="19">
    <source>
    </source>
</evidence>
<evidence type="ECO:0007744" key="20">
    <source>
    </source>
</evidence>
<evidence type="ECO:0007829" key="21">
    <source>
        <dbReference type="PDB" id="5I4E"/>
    </source>
</evidence>
<feature type="initiator methionine" description="Removed" evidence="13">
    <location>
        <position position="1"/>
    </location>
</feature>
<feature type="chain" id="PRO_0000123431" description="Myosin-14">
    <location>
        <begin position="2"/>
        <end position="1995"/>
    </location>
</feature>
<feature type="domain" description="Myosin N-terminal SH3-like" evidence="5">
    <location>
        <begin position="51"/>
        <end position="101"/>
    </location>
</feature>
<feature type="domain" description="Myosin motor" evidence="4">
    <location>
        <begin position="105"/>
        <end position="800"/>
    </location>
</feature>
<feature type="domain" description="IQ" evidence="3">
    <location>
        <begin position="803"/>
        <end position="832"/>
    </location>
</feature>
<feature type="region of interest" description="Disordered" evidence="6">
    <location>
        <begin position="1"/>
        <end position="46"/>
    </location>
</feature>
<feature type="region of interest" description="Actin-binding" evidence="4">
    <location>
        <begin position="678"/>
        <end position="700"/>
    </location>
</feature>
<feature type="region of interest" description="Disordered" evidence="6">
    <location>
        <begin position="1371"/>
        <end position="1415"/>
    </location>
</feature>
<feature type="region of interest" description="Disordered" evidence="6">
    <location>
        <begin position="1592"/>
        <end position="1623"/>
    </location>
</feature>
<feature type="region of interest" description="Disordered" evidence="6">
    <location>
        <begin position="1905"/>
        <end position="1942"/>
    </location>
</feature>
<feature type="region of interest" description="Disordered" evidence="6">
    <location>
        <begin position="1958"/>
        <end position="1995"/>
    </location>
</feature>
<feature type="coiled-coil region" evidence="2">
    <location>
        <begin position="862"/>
        <end position="1947"/>
    </location>
</feature>
<feature type="compositionally biased region" description="Polar residues" evidence="6">
    <location>
        <begin position="1930"/>
        <end position="1942"/>
    </location>
</feature>
<feature type="compositionally biased region" description="Pro residues" evidence="6">
    <location>
        <begin position="1981"/>
        <end position="1995"/>
    </location>
</feature>
<feature type="binding site" evidence="2">
    <location>
        <begin position="198"/>
        <end position="205"/>
    </location>
    <ligand>
        <name>ATP</name>
        <dbReference type="ChEBI" id="CHEBI:30616"/>
    </ligand>
</feature>
<feature type="modified residue" description="N-acetylalanine" evidence="13">
    <location>
        <position position="2"/>
    </location>
</feature>
<feature type="modified residue" description="Phosphoserine" evidence="20">
    <location>
        <position position="60"/>
    </location>
</feature>
<feature type="modified residue" description="Phosphothreonine" evidence="19">
    <location>
        <position position="1194"/>
    </location>
</feature>
<feature type="modified residue" description="Phosphoserine" evidence="18 20">
    <location>
        <position position="1969"/>
    </location>
</feature>
<feature type="modified residue" description="Phosphoserine" evidence="20">
    <location>
        <position position="1980"/>
    </location>
</feature>
<feature type="modified residue" description="Phosphoserine" evidence="20">
    <location>
        <position position="1983"/>
    </location>
</feature>
<feature type="modified residue" description="Phosphoserine" evidence="18 20">
    <location>
        <position position="1989"/>
    </location>
</feature>
<feature type="splice variant" id="VSP_040881" description="In isoform 2 and isoform 6." evidence="14 15 16">
    <original>P</original>
    <variation>PASVSTVSY</variation>
    <location>
        <position position="231"/>
    </location>
</feature>
<feature type="splice variant" id="VSP_040882" description="In isoform 2." evidence="15 16">
    <original>D</original>
    <variation>DEHGGFQQFSFLGSFPPSPPGSAERCSSAISPPG</variation>
    <location>
        <position position="640"/>
    </location>
</feature>
<feature type="splice variant" id="VSP_014628" description="In isoform 4." evidence="14">
    <location>
        <begin position="1317"/>
        <end position="1532"/>
    </location>
</feature>
<feature type="splice variant" id="VSP_014629" description="In isoform 5." evidence="14">
    <original>MDLEQQRQLVSTLEKKQRKFDQLLAEEK</original>
    <variation>LSPDALTDGAQPPSSLDPTGPCPRNPAL</variation>
    <location>
        <begin position="1451"/>
        <end position="1478"/>
    </location>
</feature>
<feature type="splice variant" id="VSP_014630" description="In isoform 5." evidence="14">
    <location>
        <begin position="1479"/>
        <end position="1995"/>
    </location>
</feature>
<feature type="sequence variant" id="VAR_037302" description="In DFNA4A; dbSNP:rs119103281." evidence="10">
    <original>S</original>
    <variation>L</variation>
    <location>
        <position position="120"/>
    </location>
</feature>
<feature type="sequence variant" id="VAR_022866" description="In dbSNP:rs200424400." evidence="9">
    <original>I</original>
    <variation>V</variation>
    <location>
        <position position="266"/>
    </location>
</feature>
<feature type="sequence variant" id="VAR_056176" description="In dbSNP:rs34498817.">
    <original>P</original>
    <variation>A</variation>
    <location>
        <position position="334"/>
    </location>
</feature>
<feature type="sequence variant" id="VAR_022867" description="In DFNA4A; dbSNP:rs119103280." evidence="9">
    <original>G</original>
    <variation>C</variation>
    <location>
        <position position="376"/>
    </location>
</feature>
<feature type="sequence variant" id="VAR_022868" description="In DFNA4A; dbSNP:rs28940307." evidence="9">
    <original>R</original>
    <variation>S</variation>
    <location>
        <position position="726"/>
    </location>
</feature>
<feature type="sequence variant" id="VAR_066338" description="In PNMHH; dbSNP:rs113993956." evidence="12">
    <original>R</original>
    <variation>L</variation>
    <location>
        <position position="933"/>
    </location>
</feature>
<feature type="sequence variant" id="VAR_022869" description="In DFNA4A; dbSNP:rs28940306." evidence="9">
    <original>L</original>
    <variation>F</variation>
    <location>
        <position position="976"/>
    </location>
</feature>
<feature type="sequence variant" id="VAR_066339" description="In dbSNP:rs910420638." evidence="12">
    <original>A</original>
    <variation>V</variation>
    <location>
        <position position="1154"/>
    </location>
</feature>
<feature type="sequence variant" id="VAR_056177" description="In dbSNP:rs11669191.">
    <original>A</original>
    <variation>E</variation>
    <location>
        <position position="1209"/>
    </location>
</feature>
<feature type="sequence variant" id="VAR_056178" description="In dbSNP:rs680446.">
    <original>V</original>
    <variation>I</variation>
    <location>
        <position position="1540"/>
    </location>
</feature>
<feature type="sequence variant" id="VAR_022870" description="In dbSNP:rs769482601." evidence="9">
    <original>N</original>
    <variation>S</variation>
    <location>
        <position position="1559"/>
    </location>
</feature>
<feature type="sequence conflict" description="In Ref. 5; BG468611." evidence="17" ref="5">
    <original>F</original>
    <variation>S</variation>
    <location>
        <position position="411"/>
    </location>
</feature>
<feature type="sequence conflict" description="In Ref. 5; BG468611." evidence="17" ref="5">
    <original>A</original>
    <variation>G</variation>
    <location>
        <position position="444"/>
    </location>
</feature>
<feature type="sequence conflict" description="In Ref. 5; BG468611." evidence="17" ref="5">
    <original>A</original>
    <variation>D</variation>
    <location>
        <position position="446"/>
    </location>
</feature>
<feature type="sequence conflict" description="In Ref. 5; BG468611." evidence="17" ref="5">
    <original>R</original>
    <variation>S</variation>
    <location>
        <position position="458"/>
    </location>
</feature>
<feature type="sequence conflict" description="In Ref. 5; BG468611." evidence="17" ref="5">
    <original>S</original>
    <variation>D</variation>
    <location>
        <position position="466"/>
    </location>
</feature>
<feature type="sequence conflict" description="In Ref. 5; BG468611." evidence="17" ref="5">
    <original>F</original>
    <variation>L</variation>
    <location>
        <position position="473"/>
    </location>
</feature>
<feature type="sequence conflict" description="In Ref. 5; AAH18933." evidence="17" ref="5">
    <original>M</original>
    <variation>I</variation>
    <location>
        <position position="997"/>
    </location>
</feature>
<feature type="helix" evidence="21">
    <location>
        <begin position="51"/>
        <end position="53"/>
    </location>
</feature>
<feature type="strand" evidence="21">
    <location>
        <begin position="55"/>
        <end position="60"/>
    </location>
</feature>
<feature type="turn" evidence="21">
    <location>
        <begin position="61"/>
        <end position="63"/>
    </location>
</feature>
<feature type="strand" evidence="21">
    <location>
        <begin position="64"/>
        <end position="73"/>
    </location>
</feature>
<feature type="strand" evidence="21">
    <location>
        <begin position="75"/>
        <end position="82"/>
    </location>
</feature>
<feature type="turn" evidence="21">
    <location>
        <begin position="83"/>
        <end position="85"/>
    </location>
</feature>
<feature type="strand" evidence="21">
    <location>
        <begin position="88"/>
        <end position="92"/>
    </location>
</feature>
<feature type="helix" evidence="21">
    <location>
        <begin position="93"/>
        <end position="95"/>
    </location>
</feature>
<feature type="helix" evidence="21">
    <location>
        <begin position="102"/>
        <end position="104"/>
    </location>
</feature>
<feature type="helix" evidence="21">
    <location>
        <begin position="110"/>
        <end position="112"/>
    </location>
</feature>
<feature type="helix" evidence="21">
    <location>
        <begin position="118"/>
        <end position="129"/>
    </location>
</feature>
<feature type="turn" evidence="21">
    <location>
        <begin position="130"/>
        <end position="132"/>
    </location>
</feature>
<feature type="strand" evidence="21">
    <location>
        <begin position="135"/>
        <end position="138"/>
    </location>
</feature>
<feature type="strand" evidence="21">
    <location>
        <begin position="141"/>
        <end position="145"/>
    </location>
</feature>
<feature type="helix" evidence="21">
    <location>
        <begin position="156"/>
        <end position="162"/>
    </location>
</feature>
<feature type="turn" evidence="21">
    <location>
        <begin position="167"/>
        <end position="169"/>
    </location>
</feature>
<feature type="helix" evidence="21">
    <location>
        <begin position="174"/>
        <end position="188"/>
    </location>
</feature>
<feature type="strand" evidence="21">
    <location>
        <begin position="192"/>
        <end position="197"/>
    </location>
</feature>
<feature type="helix" evidence="21">
    <location>
        <begin position="204"/>
        <end position="218"/>
    </location>
</feature>
<feature type="helix" evidence="21">
    <location>
        <begin position="233"/>
        <end position="249"/>
    </location>
</feature>
<feature type="strand" evidence="21">
    <location>
        <begin position="259"/>
        <end position="270"/>
    </location>
</feature>
<feature type="strand" evidence="21">
    <location>
        <begin position="276"/>
        <end position="284"/>
    </location>
</feature>
<feature type="helix" evidence="21">
    <location>
        <begin position="288"/>
        <end position="291"/>
    </location>
</feature>
<feature type="helix" evidence="21">
    <location>
        <begin position="302"/>
        <end position="310"/>
    </location>
</feature>
<feature type="helix" evidence="21">
    <location>
        <begin position="313"/>
        <end position="318"/>
    </location>
</feature>
<feature type="helix" evidence="21">
    <location>
        <begin position="324"/>
        <end position="326"/>
    </location>
</feature>
<feature type="helix" evidence="21">
    <location>
        <begin position="340"/>
        <end position="354"/>
    </location>
</feature>
<feature type="helix" evidence="21">
    <location>
        <begin position="359"/>
        <end position="374"/>
    </location>
</feature>
<feature type="helix" evidence="21">
    <location>
        <begin position="375"/>
        <end position="377"/>
    </location>
</feature>
<feature type="strand" evidence="21">
    <location>
        <begin position="384"/>
        <end position="386"/>
    </location>
</feature>
<feature type="strand" evidence="21">
    <location>
        <begin position="388"/>
        <end position="390"/>
    </location>
</feature>
<feature type="helix" evidence="21">
    <location>
        <begin position="395"/>
        <end position="404"/>
    </location>
</feature>
<feature type="helix" evidence="21">
    <location>
        <begin position="408"/>
        <end position="416"/>
    </location>
</feature>
<feature type="strand" evidence="21">
    <location>
        <begin position="419"/>
        <end position="422"/>
    </location>
</feature>
<feature type="strand" evidence="21">
    <location>
        <begin position="425"/>
        <end position="428"/>
    </location>
</feature>
<feature type="helix" evidence="21">
    <location>
        <begin position="433"/>
        <end position="463"/>
    </location>
</feature>
<feature type="strand" evidence="21">
    <location>
        <begin position="473"/>
        <end position="477"/>
    </location>
</feature>
<feature type="helix" evidence="21">
    <location>
        <begin position="490"/>
        <end position="519"/>
    </location>
</feature>
<feature type="turn" evidence="21">
    <location>
        <begin position="520"/>
        <end position="522"/>
    </location>
</feature>
<feature type="helix" evidence="21">
    <location>
        <begin position="535"/>
        <end position="542"/>
    </location>
</feature>
<feature type="strand" evidence="21">
    <location>
        <begin position="545"/>
        <end position="547"/>
    </location>
</feature>
<feature type="helix" evidence="21">
    <location>
        <begin position="550"/>
        <end position="558"/>
    </location>
</feature>
<feature type="helix" evidence="21">
    <location>
        <begin position="565"/>
        <end position="576"/>
    </location>
</feature>
<feature type="turn" evidence="21">
    <location>
        <begin position="587"/>
        <end position="589"/>
    </location>
</feature>
<feature type="strand" evidence="21">
    <location>
        <begin position="592"/>
        <end position="598"/>
    </location>
</feature>
<feature type="strand" evidence="21">
    <location>
        <begin position="601"/>
        <end position="605"/>
    </location>
</feature>
<feature type="helix" evidence="21">
    <location>
        <begin position="610"/>
        <end position="615"/>
    </location>
</feature>
<feature type="helix" evidence="21">
    <location>
        <begin position="620"/>
        <end position="627"/>
    </location>
</feature>
<feature type="helix" evidence="21">
    <location>
        <begin position="632"/>
        <end position="637"/>
    </location>
</feature>
<feature type="helix" evidence="21">
    <location>
        <begin position="670"/>
        <end position="686"/>
    </location>
</feature>
<feature type="strand" evidence="21">
    <location>
        <begin position="688"/>
        <end position="696"/>
    </location>
</feature>
<feature type="helix" evidence="21">
    <location>
        <begin position="709"/>
        <end position="719"/>
    </location>
</feature>
<feature type="helix" evidence="21">
    <location>
        <begin position="721"/>
        <end position="730"/>
    </location>
</feature>
<feature type="strand" evidence="21">
    <location>
        <begin position="734"/>
        <end position="737"/>
    </location>
</feature>
<feature type="helix" evidence="21">
    <location>
        <begin position="738"/>
        <end position="745"/>
    </location>
</feature>
<feature type="turn" evidence="21">
    <location>
        <begin position="746"/>
        <end position="748"/>
    </location>
</feature>
<feature type="helix" evidence="21">
    <location>
        <begin position="760"/>
        <end position="771"/>
    </location>
</feature>
<feature type="helix" evidence="21">
    <location>
        <begin position="775"/>
        <end position="777"/>
    </location>
</feature>
<feature type="strand" evidence="21">
    <location>
        <begin position="778"/>
        <end position="780"/>
    </location>
</feature>
<feature type="strand" evidence="21">
    <location>
        <begin position="782"/>
        <end position="784"/>
    </location>
</feature>
<comment type="function">
    <text evidence="1">Cellular myosin that appears to play a role in cytokinesis, cell shape, and specialized functions such as secretion and capping.</text>
</comment>
<comment type="subunit">
    <text evidence="1">Myosin is a hexameric protein that consists of 2 heavy chain subunits (MHC), 2 alkali light chain subunits (MLC) and 2 regulatory light chain subunits (MLC-2).</text>
</comment>
<comment type="alternative products">
    <event type="alternative splicing"/>
    <isoform>
        <id>Q7Z406-1</id>
        <name>1</name>
        <sequence type="displayed"/>
    </isoform>
    <isoform>
        <id>Q7Z406-2</id>
        <name>2</name>
        <sequence type="described" ref="VSP_040881 VSP_040882"/>
    </isoform>
    <isoform>
        <id>Q7Z406-4</id>
        <name>4</name>
        <sequence type="described" ref="VSP_014628"/>
    </isoform>
    <isoform>
        <id>Q7Z406-5</id>
        <name>5</name>
        <sequence type="described" ref="VSP_014629 VSP_014630"/>
    </isoform>
    <isoform>
        <id>Q7Z406-6</id>
        <name>6</name>
        <sequence type="described" ref="VSP_040881"/>
    </isoform>
</comment>
<comment type="tissue specificity">
    <text evidence="7 8 11">High levels of expression are found in brain (highest in corpus callosum), heart, kidney, liver, lung, small intestine, colon and skeletal muscle. Expression is low in organs composed mainly of smooth muscle, such as aorta, uterus and urinary bladder. No detectable expression is found in thymus, spleen, placenta and lymphocytes.</text>
</comment>
<comment type="domain">
    <text evidence="1">The rodlike tail sequence is highly repetitive, showing cycles of a 28-residue repeat pattern composed of 4 heptapeptides, characteristic for alpha-helical coiled coils.</text>
</comment>
<comment type="disease" evidence="9 10">
    <disease id="DI-00836">
        <name>Deafness, autosomal dominant, 4A</name>
        <acronym>DFNA4A</acronym>
        <description>A form of non-syndromic sensorineural hearing loss. Sensorineural deafness results from damage to the neural receptors of the inner ear, the nerve pathways to the brain, or the area of the brain that receives sound information.</description>
        <dbReference type="MIM" id="600652"/>
    </disease>
    <text>The disease is caused by variants affecting the gene represented in this entry.</text>
</comment>
<comment type="disease" evidence="12">
    <disease id="DI-03320">
        <name>Peripheral neuropathy, myopathy, hoarseness, and hearing loss</name>
        <acronym>PNMHH</acronym>
        <description>A complex phenotype of progressive peripheral neuropathy and distal myopathy, with later onset of hoarseness and hearing loss. Affected individuals develop distal muscle weakness at a mean age of 10.6 years, followed by progressive atrophy of these muscles. The lower limbs are more severely affected than the upper limbs, and the muscle weakness first affects anterior leg muscles and later posterior leg muscles.</description>
        <dbReference type="MIM" id="614369"/>
    </disease>
    <text>The disease is caused by variants affecting the gene represented in this entry.</text>
</comment>
<comment type="similarity">
    <text evidence="17">Belongs to the TRAFAC class myosin-kinesin ATPase superfamily. Myosin family.</text>
</comment>
<comment type="sequence caution" evidence="17">
    <conflict type="frameshift">
        <sequence resource="EMBL-CDS" id="AAO39147"/>
    </conflict>
</comment>
<comment type="sequence caution" evidence="17">
    <conflict type="erroneous initiation">
        <sequence resource="EMBL-CDS" id="AAP34449"/>
    </conflict>
    <text>Truncated N-terminus.</text>
</comment>
<comment type="sequence caution" evidence="17">
    <conflict type="frameshift">
        <sequence resource="EMBL-CDS" id="AAP34449"/>
    </conflict>
</comment>
<comment type="sequence caution" evidence="17">
    <conflict type="erroneous initiation">
        <sequence resource="EMBL-CDS" id="BAB14735"/>
    </conflict>
    <text>Truncated N-terminus.</text>
</comment>
<comment type="sequence caution" evidence="17">
    <conflict type="erroneous termination">
        <sequence resource="EMBL" id="BG468611"/>
    </conflict>
    <text>Truncated C-terminus.</text>
</comment>
<accession>Q7Z406</accession>
<accession>B0I1S2</accession>
<accession>C3TTN4</accession>
<accession>Q5CZ75</accession>
<accession>Q6XYE4</accession>
<accession>Q76B62</accession>
<accession>Q8WV23</accession>
<accession>Q96I22</accession>
<accession>Q9BT27</accession>
<accession>Q9BW35</accession>
<accession>Q9H882</accession>